<organism>
    <name type="scientific">Triticum aestivum</name>
    <name type="common">Wheat</name>
    <dbReference type="NCBI Taxonomy" id="4565"/>
    <lineage>
        <taxon>Eukaryota</taxon>
        <taxon>Viridiplantae</taxon>
        <taxon>Streptophyta</taxon>
        <taxon>Embryophyta</taxon>
        <taxon>Tracheophyta</taxon>
        <taxon>Spermatophyta</taxon>
        <taxon>Magnoliopsida</taxon>
        <taxon>Liliopsida</taxon>
        <taxon>Poales</taxon>
        <taxon>Poaceae</taxon>
        <taxon>BOP clade</taxon>
        <taxon>Pooideae</taxon>
        <taxon>Triticodae</taxon>
        <taxon>Triticeae</taxon>
        <taxon>Triticinae</taxon>
        <taxon>Triticum</taxon>
    </lineage>
</organism>
<sequence length="136" mass="15709">MGKDTIADLLTSIRNADMNKKGTVRVVSTNITENIVKILLREGFIESVRKHQERNRYFLVSTLRHQKRKTRKGIYRTRTFLKRISRPGLRIYTNYQGIPKVLGGMGIAILSTSRGIMTDREARLNRIGGEVLCYIW</sequence>
<accession>Q95H52</accession>
<proteinExistence type="inferred from homology"/>
<reference key="1">
    <citation type="journal article" date="2000" name="Plant Mol. Biol. Rep.">
        <title>Chinese spring wheat (Triticum aestivum L.) chloroplast genome: complete sequence and contig clones.</title>
        <authorList>
            <person name="Ogihara Y."/>
            <person name="Isono K."/>
            <person name="Kojima T."/>
            <person name="Endo A."/>
            <person name="Hanaoka M."/>
            <person name="Shiina T."/>
            <person name="Terachi T."/>
            <person name="Utsugi S."/>
            <person name="Murata M."/>
            <person name="Mori N."/>
            <person name="Takumi S."/>
            <person name="Ikeo K."/>
            <person name="Gojobori T."/>
            <person name="Murai R."/>
            <person name="Murai K."/>
            <person name="Matsuoka Y."/>
            <person name="Ohnishi Y."/>
            <person name="Tajiri H."/>
            <person name="Tsunewaki K."/>
        </authorList>
    </citation>
    <scope>NUCLEOTIDE SEQUENCE [LARGE SCALE GENOMIC DNA]</scope>
    <source>
        <strain>cv. Chinese Spring</strain>
    </source>
</reference>
<gene>
    <name type="primary">rps8</name>
</gene>
<evidence type="ECO:0000250" key="1"/>
<evidence type="ECO:0000305" key="2"/>
<dbReference type="EMBL" id="AB042240">
    <property type="protein sequence ID" value="BAB47069.1"/>
    <property type="molecule type" value="Genomic_DNA"/>
</dbReference>
<dbReference type="RefSeq" id="NP_114293.1">
    <property type="nucleotide sequence ID" value="NC_002762.1"/>
</dbReference>
<dbReference type="SMR" id="Q95H52"/>
<dbReference type="STRING" id="4565.Q95H52"/>
<dbReference type="PaxDb" id="4565-EPlTAEP00000010071"/>
<dbReference type="EnsemblPlants" id="TraesCS1D03G0312000.1">
    <property type="protein sequence ID" value="TraesCS1D03G0312000.1.CDS1"/>
    <property type="gene ID" value="TraesCS1D03G0312000"/>
</dbReference>
<dbReference type="EnsemblPlants" id="TraesCS2B03G0703300.1">
    <property type="protein sequence ID" value="TraesCS2B03G0703300.1.CDS1"/>
    <property type="gene ID" value="TraesCS2B03G0703300"/>
</dbReference>
<dbReference type="EnsemblPlants" id="TraesCS5D03G0514500.1">
    <property type="protein sequence ID" value="TraesCS5D03G0514500.1.CDS1"/>
    <property type="gene ID" value="TraesCS5D03G0514500"/>
</dbReference>
<dbReference type="EnsemblPlants" id="TraesCS5D03G1230600.1">
    <property type="protein sequence ID" value="TraesCS5D03G1230600.1.CDS1"/>
    <property type="gene ID" value="TraesCS5D03G1230600"/>
</dbReference>
<dbReference type="EnsemblPlants" id="TraesCSU02G184800.1">
    <property type="protein sequence ID" value="TraesCSU02G184800.1.cds1"/>
    <property type="gene ID" value="TraesCSU02G184800"/>
</dbReference>
<dbReference type="EnsemblPlants" id="TraesCSU03G0264800.1">
    <property type="protein sequence ID" value="TraesCSU03G0264800.1.CDS1"/>
    <property type="gene ID" value="TraesCSU03G0264800"/>
</dbReference>
<dbReference type="EnsemblPlants" id="TraesJAG5B03G02848510.1">
    <property type="protein sequence ID" value="TraesJAG5B03G02848510.1.CDS1"/>
    <property type="gene ID" value="TraesJAG5B03G02848510"/>
</dbReference>
<dbReference type="EnsemblPlants" id="TraesJUL2D03G01304710.1">
    <property type="protein sequence ID" value="TraesJUL2D03G01304710.1.CDS1"/>
    <property type="gene ID" value="TraesJUL2D03G01304710"/>
</dbReference>
<dbReference type="EnsemblPlants" id="TraesKAR2D01G0458730.1">
    <property type="protein sequence ID" value="cds.TraesKAR2D01G0458730.1"/>
    <property type="gene ID" value="TraesKAR2D01G0458730"/>
</dbReference>
<dbReference type="EnsemblPlants" id="TraesKAR4D01G0083910.1">
    <property type="protein sequence ID" value="cds.TraesKAR4D01G0083910.1"/>
    <property type="gene ID" value="TraesKAR4D01G0083910"/>
</dbReference>
<dbReference type="EnsemblPlants" id="TraesKAR7D01G0464650.1">
    <property type="protein sequence ID" value="cds.TraesKAR7D01G0464650.1"/>
    <property type="gene ID" value="TraesKAR7D01G0464650"/>
</dbReference>
<dbReference type="EnsemblPlants" id="TraesKARUn01G0088160.1">
    <property type="protein sequence ID" value="cds.TraesKARUn01G0088160.1"/>
    <property type="gene ID" value="TraesKARUn01G0088160"/>
</dbReference>
<dbReference type="EnsemblPlants" id="TraesKARUn01G0088180.1">
    <property type="protein sequence ID" value="cds.TraesKARUn01G0088180.1"/>
    <property type="gene ID" value="TraesKARUn01G0088180"/>
</dbReference>
<dbReference type="EnsemblPlants" id="TraesKARUn01G0088320.1">
    <property type="protein sequence ID" value="cds.TraesKARUn01G0088320.1"/>
    <property type="gene ID" value="TraesKARUn01G0088320"/>
</dbReference>
<dbReference type="EnsemblPlants" id="TraesKARUn01G0088840.1">
    <property type="protein sequence ID" value="cds.TraesKARUn01G0088840.1"/>
    <property type="gene ID" value="TraesKARUn01G0088840"/>
</dbReference>
<dbReference type="EnsemblPlants" id="TraesKARUn01G0089010.1">
    <property type="protein sequence ID" value="cds.TraesKARUn01G0089010.1"/>
    <property type="gene ID" value="TraesKARUn01G0089010"/>
</dbReference>
<dbReference type="EnsemblPlants" id="TraesKARUn01G0089110.1">
    <property type="protein sequence ID" value="cds.TraesKARUn01G0089110.1"/>
    <property type="gene ID" value="TraesKARUn01G0089110"/>
</dbReference>
<dbReference type="EnsemblPlants" id="TraesKARUn01G0116830.1">
    <property type="protein sequence ID" value="cds.TraesKARUn01G0116830.1"/>
    <property type="gene ID" value="TraesKARUn01G0116830"/>
</dbReference>
<dbReference type="EnsemblPlants" id="TraesKARUn01G0132610.1">
    <property type="protein sequence ID" value="cds.TraesKARUn01G0132610.1"/>
    <property type="gene ID" value="TraesKARUn01G0132610"/>
</dbReference>
<dbReference type="EnsemblPlants" id="TraesKARUn01G0159730.1">
    <property type="protein sequence ID" value="cds.TraesKARUn01G0159730.1"/>
    <property type="gene ID" value="TraesKARUn01G0159730"/>
</dbReference>
<dbReference type="EnsemblPlants" id="TraesKARUn01G0159840.1">
    <property type="protein sequence ID" value="cds.TraesKARUn01G0159840.1"/>
    <property type="gene ID" value="TraesKARUn01G0159840"/>
</dbReference>
<dbReference type="EnsemblPlants" id="TraesKARUn01G0174990.1">
    <property type="protein sequence ID" value="cds.TraesKARUn01G0174990.1"/>
    <property type="gene ID" value="TraesKARUn01G0174990"/>
</dbReference>
<dbReference type="EnsemblPlants" id="TraesKARUn01G0175750.1">
    <property type="protein sequence ID" value="cds.TraesKARUn01G0175750.1"/>
    <property type="gene ID" value="TraesKARUn01G0175750"/>
</dbReference>
<dbReference type="EnsemblPlants" id="TraesKARUn01G0175970.1">
    <property type="protein sequence ID" value="cds.TraesKARUn01G0175970.1"/>
    <property type="gene ID" value="TraesKARUn01G0175970"/>
</dbReference>
<dbReference type="EnsemblPlants" id="TraesKARUn01G0176260.1">
    <property type="protein sequence ID" value="cds.TraesKARUn01G0176260.1"/>
    <property type="gene ID" value="TraesKARUn01G0176260"/>
</dbReference>
<dbReference type="EnsemblPlants" id="TraesKARUn01G0185990.1">
    <property type="protein sequence ID" value="cds.TraesKARUn01G0185990.1"/>
    <property type="gene ID" value="TraesKARUn01G0185990"/>
</dbReference>
<dbReference type="EnsemblPlants" id="TraesKARUn01G0186240.1">
    <property type="protein sequence ID" value="cds.TraesKARUn01G0186240.1"/>
    <property type="gene ID" value="TraesKARUn01G0186240"/>
</dbReference>
<dbReference type="EnsemblPlants" id="TraesLAC7D03G04438970.1">
    <property type="protein sequence ID" value="TraesLAC7D03G04438970.1.CDS1"/>
    <property type="gene ID" value="TraesLAC7D03G04438970"/>
</dbReference>
<dbReference type="EnsemblPlants" id="TraesLAC7D03G04439010.1">
    <property type="protein sequence ID" value="TraesLAC7D03G04439010.1.CDS1"/>
    <property type="gene ID" value="TraesLAC7D03G04439010"/>
</dbReference>
<dbReference type="EnsemblPlants" id="TraesLDM3B03G01608420.1">
    <property type="protein sequence ID" value="TraesLDM3B03G01608420.1.CDS1"/>
    <property type="gene ID" value="TraesLDM3B03G01608420"/>
</dbReference>
<dbReference type="EnsemblPlants" id="TraesLDM7D03G04499850.1">
    <property type="protein sequence ID" value="TraesLDM7D03G04499850.1.CDS1"/>
    <property type="gene ID" value="TraesLDM7D03G04499850"/>
</dbReference>
<dbReference type="EnsemblPlants" id="TraesMAC1D03G00454810.1">
    <property type="protein sequence ID" value="TraesMAC1D03G00454810.1.CDS1"/>
    <property type="gene ID" value="TraesMAC1D03G00454810"/>
</dbReference>
<dbReference type="EnsemblPlants" id="TraesMAC7D03G04485800.1">
    <property type="protein sequence ID" value="TraesMAC7D03G04485800.1.CDS1"/>
    <property type="gene ID" value="TraesMAC7D03G04485800"/>
</dbReference>
<dbReference type="EnsemblPlants" id="TraesNOR5D03G03105550.1">
    <property type="protein sequence ID" value="TraesNOR5D03G03105550.1.CDS1"/>
    <property type="gene ID" value="TraesNOR5D03G03105550"/>
</dbReference>
<dbReference type="EnsemblPlants" id="TraesNOR7A03G03900030.1">
    <property type="protein sequence ID" value="TraesNOR7A03G03900030.1.CDS1"/>
    <property type="gene ID" value="TraesNOR7A03G03900030"/>
</dbReference>
<dbReference type="EnsemblPlants" id="TraesPARA_EIv1.0_0758420.1">
    <property type="protein sequence ID" value="TraesPARA_EIv1.0_0758420.1.CDS1"/>
    <property type="gene ID" value="TraesPARA_EIv1.0_0758420"/>
</dbReference>
<dbReference type="EnsemblPlants" id="TraesPARA_EIv1.0_1434340.1">
    <property type="protein sequence ID" value="TraesPARA_EIv1.0_1434340.1.CDS1"/>
    <property type="gene ID" value="TraesPARA_EIv1.0_1434340"/>
</dbReference>
<dbReference type="EnsemblPlants" id="TraesPARA_EIv1.0_2055430.1">
    <property type="protein sequence ID" value="TraesPARA_EIv1.0_2055430.1.CDS1"/>
    <property type="gene ID" value="TraesPARA_EIv1.0_2055430"/>
</dbReference>
<dbReference type="EnsemblPlants" id="TraesPARA_EIv1.0_2643210.1">
    <property type="protein sequence ID" value="TraesPARA_EIv1.0_2643210.1.CDS1"/>
    <property type="gene ID" value="TraesPARA_EIv1.0_2643210"/>
</dbReference>
<dbReference type="EnsemblPlants" id="TraesPARA_EIv1.0_2643510.1">
    <property type="protein sequence ID" value="TraesPARA_EIv1.0_2643510.1.CDS1"/>
    <property type="gene ID" value="TraesPARA_EIv1.0_2643510"/>
</dbReference>
<dbReference type="EnsemblPlants" id="TraesPARA_EIv1.0_2643760.1">
    <property type="protein sequence ID" value="TraesPARA_EIv1.0_2643760.1.CDS1"/>
    <property type="gene ID" value="TraesPARA_EIv1.0_2643760"/>
</dbReference>
<dbReference type="EnsemblPlants" id="TraesPARA_EIv1.0_2643940.1">
    <property type="protein sequence ID" value="TraesPARA_EIv1.0_2643940.1.CDS1"/>
    <property type="gene ID" value="TraesPARA_EIv1.0_2643940"/>
</dbReference>
<dbReference type="EnsemblPlants" id="TraesPARA_EIv1.0_2644780.1">
    <property type="protein sequence ID" value="TraesPARA_EIv1.0_2644780.1.CDS1"/>
    <property type="gene ID" value="TraesPARA_EIv1.0_2644780"/>
</dbReference>
<dbReference type="EnsemblPlants" id="TraesPARA_EIv1.0_2646800.1">
    <property type="protein sequence ID" value="TraesPARA_EIv1.0_2646800.1.CDS1"/>
    <property type="gene ID" value="TraesPARA_EIv1.0_2646800"/>
</dbReference>
<dbReference type="EnsemblPlants" id="TraesPARA_EIv1.0_2650010.1">
    <property type="protein sequence ID" value="TraesPARA_EIv1.0_2650010.1.CDS1"/>
    <property type="gene ID" value="TraesPARA_EIv1.0_2650010"/>
</dbReference>
<dbReference type="EnsemblPlants" id="TraesPARA_EIv1.0_2675250.1">
    <property type="protein sequence ID" value="TraesPARA_EIv1.0_2675250.1.CDS1"/>
    <property type="gene ID" value="TraesPARA_EIv1.0_2675250"/>
</dbReference>
<dbReference type="EnsemblPlants" id="TraesPARA_EIv1.0_2675360.1">
    <property type="protein sequence ID" value="TraesPARA_EIv1.0_2675360.1.CDS1"/>
    <property type="gene ID" value="TraesPARA_EIv1.0_2675360"/>
</dbReference>
<dbReference type="EnsemblPlants" id="TraesPARA_EIv1.0_2678940.1">
    <property type="protein sequence ID" value="TraesPARA_EIv1.0_2678940.1.CDS1"/>
    <property type="gene ID" value="TraesPARA_EIv1.0_2678940"/>
</dbReference>
<dbReference type="EnsemblPlants" id="TraesRN1D0100324600.1">
    <property type="protein sequence ID" value="TraesRN1D0100324600.1"/>
    <property type="gene ID" value="TraesRN1D0100324600"/>
</dbReference>
<dbReference type="EnsemblPlants" id="TraesRN1D0100324700.1">
    <property type="protein sequence ID" value="TraesRN1D0100324700.1"/>
    <property type="gene ID" value="TraesRN1D0100324700"/>
</dbReference>
<dbReference type="EnsemblPlants" id="TraesRN1D0100324800.1">
    <property type="protein sequence ID" value="TraesRN1D0100324800.1"/>
    <property type="gene ID" value="TraesRN1D0100324800"/>
</dbReference>
<dbReference type="EnsemblPlants" id="TraesRN2D0100580300.1">
    <property type="protein sequence ID" value="TraesRN2D0100580300.1"/>
    <property type="gene ID" value="TraesRN2D0100580300"/>
</dbReference>
<dbReference type="EnsemblPlants" id="TraesRN3A0101022800.1">
    <property type="protein sequence ID" value="TraesRN3A0101022800.1"/>
    <property type="gene ID" value="TraesRN3A0101022800"/>
</dbReference>
<dbReference type="EnsemblPlants" id="TraesRN4D0100079400.1">
    <property type="protein sequence ID" value="TraesRN4D0100079400.1"/>
    <property type="gene ID" value="TraesRN4D0100079400"/>
</dbReference>
<dbReference type="EnsemblPlants" id="TraesRN7A0100507500.1">
    <property type="protein sequence ID" value="TraesRN7A0100507500.1"/>
    <property type="gene ID" value="TraesRN7A0100507500"/>
</dbReference>
<dbReference type="EnsemblPlants" id="TraesSYM3B03G01563950.1">
    <property type="protein sequence ID" value="TraesSYM3B03G01563950.1.CDS1"/>
    <property type="gene ID" value="TraesSYM3B03G01563950"/>
</dbReference>
<dbReference type="GeneID" id="803168"/>
<dbReference type="Gramene" id="TraesCS1D03G0312000.1">
    <property type="protein sequence ID" value="TraesCS1D03G0312000.1.CDS1"/>
    <property type="gene ID" value="TraesCS1D03G0312000"/>
</dbReference>
<dbReference type="Gramene" id="TraesCS2B03G0703300.1">
    <property type="protein sequence ID" value="TraesCS2B03G0703300.1.CDS1"/>
    <property type="gene ID" value="TraesCS2B03G0703300"/>
</dbReference>
<dbReference type="Gramene" id="TraesCS5D03G0514500.1">
    <property type="protein sequence ID" value="TraesCS5D03G0514500.1.CDS1"/>
    <property type="gene ID" value="TraesCS5D03G0514500"/>
</dbReference>
<dbReference type="Gramene" id="TraesCS5D03G1230600.1">
    <property type="protein sequence ID" value="TraesCS5D03G1230600.1.CDS1"/>
    <property type="gene ID" value="TraesCS5D03G1230600"/>
</dbReference>
<dbReference type="Gramene" id="TraesCSU02G184800.1">
    <property type="protein sequence ID" value="TraesCSU02G184800.1.cds1"/>
    <property type="gene ID" value="TraesCSU02G184800"/>
</dbReference>
<dbReference type="Gramene" id="TraesCSU03G0264800.1">
    <property type="protein sequence ID" value="TraesCSU03G0264800.1.CDS1"/>
    <property type="gene ID" value="TraesCSU03G0264800"/>
</dbReference>
<dbReference type="Gramene" id="TraesJAG5B03G02848510.1">
    <property type="protein sequence ID" value="TraesJAG5B03G02848510.1.CDS1"/>
    <property type="gene ID" value="TraesJAG5B03G02848510"/>
</dbReference>
<dbReference type="Gramene" id="TraesJUL2D03G01304710.1">
    <property type="protein sequence ID" value="TraesJUL2D03G01304710.1.CDS1"/>
    <property type="gene ID" value="TraesJUL2D03G01304710"/>
</dbReference>
<dbReference type="Gramene" id="TraesKAR2D01G0458730.1">
    <property type="protein sequence ID" value="cds.TraesKAR2D01G0458730.1"/>
    <property type="gene ID" value="TraesKAR2D01G0458730"/>
</dbReference>
<dbReference type="Gramene" id="TraesKAR4D01G0083910.1">
    <property type="protein sequence ID" value="cds.TraesKAR4D01G0083910.1"/>
    <property type="gene ID" value="TraesKAR4D01G0083910"/>
</dbReference>
<dbReference type="Gramene" id="TraesKAR7D01G0464650.1">
    <property type="protein sequence ID" value="cds.TraesKAR7D01G0464650.1"/>
    <property type="gene ID" value="TraesKAR7D01G0464650"/>
</dbReference>
<dbReference type="Gramene" id="TraesKARUn01G0088160.1">
    <property type="protein sequence ID" value="cds.TraesKARUn01G0088160.1"/>
    <property type="gene ID" value="TraesKARUn01G0088160"/>
</dbReference>
<dbReference type="Gramene" id="TraesKARUn01G0088180.1">
    <property type="protein sequence ID" value="cds.TraesKARUn01G0088180.1"/>
    <property type="gene ID" value="TraesKARUn01G0088180"/>
</dbReference>
<dbReference type="Gramene" id="TraesKARUn01G0088320.1">
    <property type="protein sequence ID" value="cds.TraesKARUn01G0088320.1"/>
    <property type="gene ID" value="TraesKARUn01G0088320"/>
</dbReference>
<dbReference type="Gramene" id="TraesKARUn01G0088840.1">
    <property type="protein sequence ID" value="cds.TraesKARUn01G0088840.1"/>
    <property type="gene ID" value="TraesKARUn01G0088840"/>
</dbReference>
<dbReference type="Gramene" id="TraesKARUn01G0089010.1">
    <property type="protein sequence ID" value="cds.TraesKARUn01G0089010.1"/>
    <property type="gene ID" value="TraesKARUn01G0089010"/>
</dbReference>
<dbReference type="Gramene" id="TraesKARUn01G0089110.1">
    <property type="protein sequence ID" value="cds.TraesKARUn01G0089110.1"/>
    <property type="gene ID" value="TraesKARUn01G0089110"/>
</dbReference>
<dbReference type="Gramene" id="TraesKARUn01G0116830.1">
    <property type="protein sequence ID" value="cds.TraesKARUn01G0116830.1"/>
    <property type="gene ID" value="TraesKARUn01G0116830"/>
</dbReference>
<dbReference type="Gramene" id="TraesKARUn01G0132610.1">
    <property type="protein sequence ID" value="cds.TraesKARUn01G0132610.1"/>
    <property type="gene ID" value="TraesKARUn01G0132610"/>
</dbReference>
<dbReference type="Gramene" id="TraesKARUn01G0159730.1">
    <property type="protein sequence ID" value="cds.TraesKARUn01G0159730.1"/>
    <property type="gene ID" value="TraesKARUn01G0159730"/>
</dbReference>
<dbReference type="Gramene" id="TraesKARUn01G0159840.1">
    <property type="protein sequence ID" value="cds.TraesKARUn01G0159840.1"/>
    <property type="gene ID" value="TraesKARUn01G0159840"/>
</dbReference>
<dbReference type="Gramene" id="TraesKARUn01G0174990.1">
    <property type="protein sequence ID" value="cds.TraesKARUn01G0174990.1"/>
    <property type="gene ID" value="TraesKARUn01G0174990"/>
</dbReference>
<dbReference type="Gramene" id="TraesKARUn01G0175750.1">
    <property type="protein sequence ID" value="cds.TraesKARUn01G0175750.1"/>
    <property type="gene ID" value="TraesKARUn01G0175750"/>
</dbReference>
<dbReference type="Gramene" id="TraesKARUn01G0175970.1">
    <property type="protein sequence ID" value="cds.TraesKARUn01G0175970.1"/>
    <property type="gene ID" value="TraesKARUn01G0175970"/>
</dbReference>
<dbReference type="Gramene" id="TraesKARUn01G0176260.1">
    <property type="protein sequence ID" value="cds.TraesKARUn01G0176260.1"/>
    <property type="gene ID" value="TraesKARUn01G0176260"/>
</dbReference>
<dbReference type="Gramene" id="TraesKARUn01G0185990.1">
    <property type="protein sequence ID" value="cds.TraesKARUn01G0185990.1"/>
    <property type="gene ID" value="TraesKARUn01G0185990"/>
</dbReference>
<dbReference type="Gramene" id="TraesKARUn01G0186240.1">
    <property type="protein sequence ID" value="cds.TraesKARUn01G0186240.1"/>
    <property type="gene ID" value="TraesKARUn01G0186240"/>
</dbReference>
<dbReference type="Gramene" id="TraesLAC7D03G04438970.1">
    <property type="protein sequence ID" value="TraesLAC7D03G04438970.1.CDS1"/>
    <property type="gene ID" value="TraesLAC7D03G04438970"/>
</dbReference>
<dbReference type="Gramene" id="TraesLAC7D03G04439010.1">
    <property type="protein sequence ID" value="TraesLAC7D03G04439010.1.CDS1"/>
    <property type="gene ID" value="TraesLAC7D03G04439010"/>
</dbReference>
<dbReference type="Gramene" id="TraesLDM3B03G01608420.1">
    <property type="protein sequence ID" value="TraesLDM3B03G01608420.1.CDS1"/>
    <property type="gene ID" value="TraesLDM3B03G01608420"/>
</dbReference>
<dbReference type="Gramene" id="TraesLDM7D03G04499850.1">
    <property type="protein sequence ID" value="TraesLDM7D03G04499850.1.CDS1"/>
    <property type="gene ID" value="TraesLDM7D03G04499850"/>
</dbReference>
<dbReference type="Gramene" id="TraesMAC1D03G00454810.1">
    <property type="protein sequence ID" value="TraesMAC1D03G00454810.1.CDS1"/>
    <property type="gene ID" value="TraesMAC1D03G00454810"/>
</dbReference>
<dbReference type="Gramene" id="TraesMAC7D03G04485800.1">
    <property type="protein sequence ID" value="TraesMAC7D03G04485800.1.CDS1"/>
    <property type="gene ID" value="TraesMAC7D03G04485800"/>
</dbReference>
<dbReference type="Gramene" id="TraesNOR5D03G03105550.1">
    <property type="protein sequence ID" value="TraesNOR5D03G03105550.1.CDS1"/>
    <property type="gene ID" value="TraesNOR5D03G03105550"/>
</dbReference>
<dbReference type="Gramene" id="TraesNOR7A03G03900030.1">
    <property type="protein sequence ID" value="TraesNOR7A03G03900030.1.CDS1"/>
    <property type="gene ID" value="TraesNOR7A03G03900030"/>
</dbReference>
<dbReference type="Gramene" id="TraesPARA_EIv1.0_0758420.1">
    <property type="protein sequence ID" value="TraesPARA_EIv1.0_0758420.1.CDS1"/>
    <property type="gene ID" value="TraesPARA_EIv1.0_0758420"/>
</dbReference>
<dbReference type="Gramene" id="TraesPARA_EIv1.0_1434340.1">
    <property type="protein sequence ID" value="TraesPARA_EIv1.0_1434340.1.CDS1"/>
    <property type="gene ID" value="TraesPARA_EIv1.0_1434340"/>
</dbReference>
<dbReference type="Gramene" id="TraesPARA_EIv1.0_2055430.1">
    <property type="protein sequence ID" value="TraesPARA_EIv1.0_2055430.1.CDS1"/>
    <property type="gene ID" value="TraesPARA_EIv1.0_2055430"/>
</dbReference>
<dbReference type="Gramene" id="TraesPARA_EIv1.0_2643210.1">
    <property type="protein sequence ID" value="TraesPARA_EIv1.0_2643210.1.CDS1"/>
    <property type="gene ID" value="TraesPARA_EIv1.0_2643210"/>
</dbReference>
<dbReference type="Gramene" id="TraesPARA_EIv1.0_2643510.1">
    <property type="protein sequence ID" value="TraesPARA_EIv1.0_2643510.1.CDS1"/>
    <property type="gene ID" value="TraesPARA_EIv1.0_2643510"/>
</dbReference>
<dbReference type="Gramene" id="TraesPARA_EIv1.0_2643760.1">
    <property type="protein sequence ID" value="TraesPARA_EIv1.0_2643760.1.CDS1"/>
    <property type="gene ID" value="TraesPARA_EIv1.0_2643760"/>
</dbReference>
<dbReference type="Gramene" id="TraesPARA_EIv1.0_2643940.1">
    <property type="protein sequence ID" value="TraesPARA_EIv1.0_2643940.1.CDS1"/>
    <property type="gene ID" value="TraesPARA_EIv1.0_2643940"/>
</dbReference>
<dbReference type="Gramene" id="TraesPARA_EIv1.0_2644780.1">
    <property type="protein sequence ID" value="TraesPARA_EIv1.0_2644780.1.CDS1"/>
    <property type="gene ID" value="TraesPARA_EIv1.0_2644780"/>
</dbReference>
<dbReference type="Gramene" id="TraesPARA_EIv1.0_2646800.1">
    <property type="protein sequence ID" value="TraesPARA_EIv1.0_2646800.1.CDS1"/>
    <property type="gene ID" value="TraesPARA_EIv1.0_2646800"/>
</dbReference>
<dbReference type="Gramene" id="TraesPARA_EIv1.0_2650010.1">
    <property type="protein sequence ID" value="TraesPARA_EIv1.0_2650010.1.CDS1"/>
    <property type="gene ID" value="TraesPARA_EIv1.0_2650010"/>
</dbReference>
<dbReference type="Gramene" id="TraesPARA_EIv1.0_2675250.1">
    <property type="protein sequence ID" value="TraesPARA_EIv1.0_2675250.1.CDS1"/>
    <property type="gene ID" value="TraesPARA_EIv1.0_2675250"/>
</dbReference>
<dbReference type="Gramene" id="TraesPARA_EIv1.0_2675360.1">
    <property type="protein sequence ID" value="TraesPARA_EIv1.0_2675360.1.CDS1"/>
    <property type="gene ID" value="TraesPARA_EIv1.0_2675360"/>
</dbReference>
<dbReference type="Gramene" id="TraesPARA_EIv1.0_2678940.1">
    <property type="protein sequence ID" value="TraesPARA_EIv1.0_2678940.1.CDS1"/>
    <property type="gene ID" value="TraesPARA_EIv1.0_2678940"/>
</dbReference>
<dbReference type="Gramene" id="TraesRN1D0100324600.1">
    <property type="protein sequence ID" value="TraesRN1D0100324600.1"/>
    <property type="gene ID" value="TraesRN1D0100324600"/>
</dbReference>
<dbReference type="Gramene" id="TraesRN1D0100324700.1">
    <property type="protein sequence ID" value="TraesRN1D0100324700.1"/>
    <property type="gene ID" value="TraesRN1D0100324700"/>
</dbReference>
<dbReference type="Gramene" id="TraesRN1D0100324800.1">
    <property type="protein sequence ID" value="TraesRN1D0100324800.1"/>
    <property type="gene ID" value="TraesRN1D0100324800"/>
</dbReference>
<dbReference type="Gramene" id="TraesRN2D0100580300.1">
    <property type="protein sequence ID" value="TraesRN2D0100580300.1"/>
    <property type="gene ID" value="TraesRN2D0100580300"/>
</dbReference>
<dbReference type="Gramene" id="TraesRN3A0101022800.1">
    <property type="protein sequence ID" value="TraesRN3A0101022800.1"/>
    <property type="gene ID" value="TraesRN3A0101022800"/>
</dbReference>
<dbReference type="Gramene" id="TraesRN4D0100079400.1">
    <property type="protein sequence ID" value="TraesRN4D0100079400.1"/>
    <property type="gene ID" value="TraesRN4D0100079400"/>
</dbReference>
<dbReference type="Gramene" id="TraesRN7A0100507500.1">
    <property type="protein sequence ID" value="TraesRN7A0100507500.1"/>
    <property type="gene ID" value="TraesRN7A0100507500"/>
</dbReference>
<dbReference type="Gramene" id="TraesSYM3B03G01563950.1">
    <property type="protein sequence ID" value="TraesSYM3B03G01563950.1.CDS1"/>
    <property type="gene ID" value="TraesSYM3B03G01563950"/>
</dbReference>
<dbReference type="KEGG" id="taes:803168"/>
<dbReference type="eggNOG" id="KOG1754">
    <property type="taxonomic scope" value="Eukaryota"/>
</dbReference>
<dbReference type="HOGENOM" id="CLU_098428_0_2_1"/>
<dbReference type="OMA" id="NSAYHDT"/>
<dbReference type="OrthoDB" id="591253at2759"/>
<dbReference type="Proteomes" id="UP000019116">
    <property type="component" value="Chloroplast"/>
</dbReference>
<dbReference type="ExpressionAtlas" id="Q95H52">
    <property type="expression patterns" value="differential"/>
</dbReference>
<dbReference type="GO" id="GO:0009507">
    <property type="term" value="C:chloroplast"/>
    <property type="evidence" value="ECO:0007669"/>
    <property type="project" value="UniProtKB-SubCell"/>
</dbReference>
<dbReference type="GO" id="GO:1990904">
    <property type="term" value="C:ribonucleoprotein complex"/>
    <property type="evidence" value="ECO:0007669"/>
    <property type="project" value="UniProtKB-KW"/>
</dbReference>
<dbReference type="GO" id="GO:0005840">
    <property type="term" value="C:ribosome"/>
    <property type="evidence" value="ECO:0007669"/>
    <property type="project" value="UniProtKB-KW"/>
</dbReference>
<dbReference type="GO" id="GO:0019843">
    <property type="term" value="F:rRNA binding"/>
    <property type="evidence" value="ECO:0007669"/>
    <property type="project" value="UniProtKB-UniRule"/>
</dbReference>
<dbReference type="GO" id="GO:0003735">
    <property type="term" value="F:structural constituent of ribosome"/>
    <property type="evidence" value="ECO:0000318"/>
    <property type="project" value="GO_Central"/>
</dbReference>
<dbReference type="GO" id="GO:0006412">
    <property type="term" value="P:translation"/>
    <property type="evidence" value="ECO:0007669"/>
    <property type="project" value="UniProtKB-UniRule"/>
</dbReference>
<dbReference type="FunFam" id="3.30.1490.10:FF:000001">
    <property type="entry name" value="30S ribosomal protein S8"/>
    <property type="match status" value="1"/>
</dbReference>
<dbReference type="FunFam" id="3.30.1370.30:FF:000004">
    <property type="entry name" value="30S ribosomal protein S8, chloroplastic"/>
    <property type="match status" value="1"/>
</dbReference>
<dbReference type="Gene3D" id="3.30.1370.30">
    <property type="match status" value="1"/>
</dbReference>
<dbReference type="Gene3D" id="3.30.1490.10">
    <property type="match status" value="1"/>
</dbReference>
<dbReference type="HAMAP" id="MF_01302_B">
    <property type="entry name" value="Ribosomal_uS8_B"/>
    <property type="match status" value="1"/>
</dbReference>
<dbReference type="InterPro" id="IPR000630">
    <property type="entry name" value="Ribosomal_uS8"/>
</dbReference>
<dbReference type="InterPro" id="IPR047863">
    <property type="entry name" value="Ribosomal_uS8_CS"/>
</dbReference>
<dbReference type="InterPro" id="IPR035987">
    <property type="entry name" value="Ribosomal_uS8_sf"/>
</dbReference>
<dbReference type="NCBIfam" id="NF001109">
    <property type="entry name" value="PRK00136.1"/>
    <property type="match status" value="1"/>
</dbReference>
<dbReference type="PANTHER" id="PTHR11758">
    <property type="entry name" value="40S RIBOSOMAL PROTEIN S15A"/>
    <property type="match status" value="1"/>
</dbReference>
<dbReference type="Pfam" id="PF00410">
    <property type="entry name" value="Ribosomal_S8"/>
    <property type="match status" value="1"/>
</dbReference>
<dbReference type="SUPFAM" id="SSF56047">
    <property type="entry name" value="Ribosomal protein S8"/>
    <property type="match status" value="1"/>
</dbReference>
<dbReference type="PROSITE" id="PS00053">
    <property type="entry name" value="RIBOSOMAL_S8"/>
    <property type="match status" value="1"/>
</dbReference>
<comment type="function">
    <text evidence="1">One of the primary rRNA binding proteins, it binds directly to 16S rRNA central domain where it helps coordinate assembly of the platform of the 30S subunit.</text>
</comment>
<comment type="subunit">
    <text evidence="1">Part of the 30S ribosomal subunit.</text>
</comment>
<comment type="subcellular location">
    <subcellularLocation>
        <location>Plastid</location>
        <location>Chloroplast</location>
    </subcellularLocation>
</comment>
<comment type="similarity">
    <text evidence="2">Belongs to the universal ribosomal protein uS8 family.</text>
</comment>
<feature type="chain" id="PRO_0000126598" description="Small ribosomal subunit protein uS8c">
    <location>
        <begin position="1"/>
        <end position="136"/>
    </location>
</feature>
<keyword id="KW-0150">Chloroplast</keyword>
<keyword id="KW-0934">Plastid</keyword>
<keyword id="KW-1185">Reference proteome</keyword>
<keyword id="KW-0687">Ribonucleoprotein</keyword>
<keyword id="KW-0689">Ribosomal protein</keyword>
<keyword id="KW-0694">RNA-binding</keyword>
<keyword id="KW-0699">rRNA-binding</keyword>
<protein>
    <recommendedName>
        <fullName evidence="2">Small ribosomal subunit protein uS8c</fullName>
    </recommendedName>
    <alternativeName>
        <fullName>30S ribosomal protein S8, chloroplastic</fullName>
    </alternativeName>
</protein>
<name>RR8_WHEAT</name>
<geneLocation type="chloroplast"/>